<sequence>MDGKFISFEGPDGAGKTSVIQQIQLELEDQLGTEKVMYTREPGGNKISEQIRQVLFDGQNTDMDGRTEALLFAAARRQHIVSEIIPGLKAGKVILCDRFVDSSIAYQGAGRGLGEKEIWQINQFAIDGLMPALTIYLDIESEIGLKRIAEHRSNQVNRLDEEKLEFHRTVRQSYLKLYQNYPERIELIDASQPLEKVIEDVKATIHDRFSDLF</sequence>
<comment type="function">
    <text evidence="1">Phosphorylation of dTMP to form dTDP in both de novo and salvage pathways of dTTP synthesis.</text>
</comment>
<comment type="catalytic activity">
    <reaction evidence="1">
        <text>dTMP + ATP = dTDP + ADP</text>
        <dbReference type="Rhea" id="RHEA:13517"/>
        <dbReference type="ChEBI" id="CHEBI:30616"/>
        <dbReference type="ChEBI" id="CHEBI:58369"/>
        <dbReference type="ChEBI" id="CHEBI:63528"/>
        <dbReference type="ChEBI" id="CHEBI:456216"/>
        <dbReference type="EC" id="2.7.4.9"/>
    </reaction>
</comment>
<comment type="similarity">
    <text evidence="1">Belongs to the thymidylate kinase family.</text>
</comment>
<protein>
    <recommendedName>
        <fullName evidence="1">Thymidylate kinase</fullName>
        <ecNumber evidence="1">2.7.4.9</ecNumber>
    </recommendedName>
    <alternativeName>
        <fullName evidence="1">dTMP kinase</fullName>
    </alternativeName>
</protein>
<evidence type="ECO:0000255" key="1">
    <source>
        <dbReference type="HAMAP-Rule" id="MF_00165"/>
    </source>
</evidence>
<feature type="chain" id="PRO_1000097408" description="Thymidylate kinase">
    <location>
        <begin position="1"/>
        <end position="213"/>
    </location>
</feature>
<feature type="binding site" evidence="1">
    <location>
        <begin position="10"/>
        <end position="17"/>
    </location>
    <ligand>
        <name>ATP</name>
        <dbReference type="ChEBI" id="CHEBI:30616"/>
    </ligand>
</feature>
<organism>
    <name type="scientific">Limosilactobacillus reuteri subsp. reuteri (strain JCM 1112)</name>
    <name type="common">Lactobacillus reuteri</name>
    <dbReference type="NCBI Taxonomy" id="557433"/>
    <lineage>
        <taxon>Bacteria</taxon>
        <taxon>Bacillati</taxon>
        <taxon>Bacillota</taxon>
        <taxon>Bacilli</taxon>
        <taxon>Lactobacillales</taxon>
        <taxon>Lactobacillaceae</taxon>
        <taxon>Limosilactobacillus</taxon>
    </lineage>
</organism>
<accession>B2G5V3</accession>
<dbReference type="EC" id="2.7.4.9" evidence="1"/>
<dbReference type="EMBL" id="AP007281">
    <property type="protein sequence ID" value="BAG24835.1"/>
    <property type="molecule type" value="Genomic_DNA"/>
</dbReference>
<dbReference type="RefSeq" id="WP_003667383.1">
    <property type="nucleotide sequence ID" value="NC_010609.1"/>
</dbReference>
<dbReference type="SMR" id="B2G5V3"/>
<dbReference type="KEGG" id="lrf:LAR_0319"/>
<dbReference type="HOGENOM" id="CLU_049131_0_2_9"/>
<dbReference type="GO" id="GO:0005829">
    <property type="term" value="C:cytosol"/>
    <property type="evidence" value="ECO:0007669"/>
    <property type="project" value="TreeGrafter"/>
</dbReference>
<dbReference type="GO" id="GO:0005524">
    <property type="term" value="F:ATP binding"/>
    <property type="evidence" value="ECO:0007669"/>
    <property type="project" value="UniProtKB-UniRule"/>
</dbReference>
<dbReference type="GO" id="GO:0004798">
    <property type="term" value="F:dTMP kinase activity"/>
    <property type="evidence" value="ECO:0007669"/>
    <property type="project" value="UniProtKB-UniRule"/>
</dbReference>
<dbReference type="GO" id="GO:0006233">
    <property type="term" value="P:dTDP biosynthetic process"/>
    <property type="evidence" value="ECO:0007669"/>
    <property type="project" value="InterPro"/>
</dbReference>
<dbReference type="GO" id="GO:0006235">
    <property type="term" value="P:dTTP biosynthetic process"/>
    <property type="evidence" value="ECO:0007669"/>
    <property type="project" value="UniProtKB-UniRule"/>
</dbReference>
<dbReference type="GO" id="GO:0006227">
    <property type="term" value="P:dUDP biosynthetic process"/>
    <property type="evidence" value="ECO:0007669"/>
    <property type="project" value="TreeGrafter"/>
</dbReference>
<dbReference type="CDD" id="cd01672">
    <property type="entry name" value="TMPK"/>
    <property type="match status" value="1"/>
</dbReference>
<dbReference type="FunFam" id="3.40.50.300:FF:000225">
    <property type="entry name" value="Thymidylate kinase"/>
    <property type="match status" value="1"/>
</dbReference>
<dbReference type="Gene3D" id="3.40.50.300">
    <property type="entry name" value="P-loop containing nucleotide triphosphate hydrolases"/>
    <property type="match status" value="1"/>
</dbReference>
<dbReference type="HAMAP" id="MF_00165">
    <property type="entry name" value="Thymidylate_kinase"/>
    <property type="match status" value="1"/>
</dbReference>
<dbReference type="InterPro" id="IPR027417">
    <property type="entry name" value="P-loop_NTPase"/>
</dbReference>
<dbReference type="InterPro" id="IPR039430">
    <property type="entry name" value="Thymidylate_kin-like_dom"/>
</dbReference>
<dbReference type="InterPro" id="IPR018095">
    <property type="entry name" value="Thymidylate_kin_CS"/>
</dbReference>
<dbReference type="InterPro" id="IPR018094">
    <property type="entry name" value="Thymidylate_kinase"/>
</dbReference>
<dbReference type="NCBIfam" id="TIGR00041">
    <property type="entry name" value="DTMP_kinase"/>
    <property type="match status" value="1"/>
</dbReference>
<dbReference type="PANTHER" id="PTHR10344">
    <property type="entry name" value="THYMIDYLATE KINASE"/>
    <property type="match status" value="1"/>
</dbReference>
<dbReference type="PANTHER" id="PTHR10344:SF4">
    <property type="entry name" value="UMP-CMP KINASE 2, MITOCHONDRIAL"/>
    <property type="match status" value="1"/>
</dbReference>
<dbReference type="Pfam" id="PF02223">
    <property type="entry name" value="Thymidylate_kin"/>
    <property type="match status" value="1"/>
</dbReference>
<dbReference type="SUPFAM" id="SSF52540">
    <property type="entry name" value="P-loop containing nucleoside triphosphate hydrolases"/>
    <property type="match status" value="1"/>
</dbReference>
<dbReference type="PROSITE" id="PS01331">
    <property type="entry name" value="THYMIDYLATE_KINASE"/>
    <property type="match status" value="1"/>
</dbReference>
<reference key="1">
    <citation type="journal article" date="2008" name="DNA Res.">
        <title>Comparative genome analysis of Lactobacillus reuteri and Lactobacillus fermentum reveal a genomic island for reuterin and cobalamin production.</title>
        <authorList>
            <person name="Morita H."/>
            <person name="Toh H."/>
            <person name="Fukuda S."/>
            <person name="Horikawa H."/>
            <person name="Oshima K."/>
            <person name="Suzuki T."/>
            <person name="Murakami M."/>
            <person name="Hisamatsu S."/>
            <person name="Kato Y."/>
            <person name="Takizawa T."/>
            <person name="Fukuoka H."/>
            <person name="Yoshimura T."/>
            <person name="Itoh K."/>
            <person name="O'Sullivan D.J."/>
            <person name="McKay L.L."/>
            <person name="Ohno H."/>
            <person name="Kikuchi J."/>
            <person name="Masaoka T."/>
            <person name="Hattori M."/>
        </authorList>
    </citation>
    <scope>NUCLEOTIDE SEQUENCE [LARGE SCALE GENOMIC DNA]</scope>
    <source>
        <strain>JCM 1112</strain>
    </source>
</reference>
<keyword id="KW-0067">ATP-binding</keyword>
<keyword id="KW-0418">Kinase</keyword>
<keyword id="KW-0545">Nucleotide biosynthesis</keyword>
<keyword id="KW-0547">Nucleotide-binding</keyword>
<keyword id="KW-0808">Transferase</keyword>
<name>KTHY_LIMRJ</name>
<gene>
    <name evidence="1" type="primary">tmk</name>
    <name type="ordered locus">LAR_0319</name>
</gene>
<proteinExistence type="inferred from homology"/>